<evidence type="ECO:0000255" key="1">
    <source>
        <dbReference type="HAMAP-Rule" id="MF_00532"/>
    </source>
</evidence>
<evidence type="ECO:0000256" key="2">
    <source>
        <dbReference type="SAM" id="MobiDB-lite"/>
    </source>
</evidence>
<evidence type="ECO:0000305" key="3"/>
<comment type="similarity">
    <text evidence="1">Belongs to the universal ribosomal protein uS9 family.</text>
</comment>
<proteinExistence type="inferred from homology"/>
<dbReference type="EMBL" id="CP000850">
    <property type="protein sequence ID" value="ABW00035.1"/>
    <property type="molecule type" value="Genomic_DNA"/>
</dbReference>
<dbReference type="SMR" id="A8M4B9"/>
<dbReference type="STRING" id="391037.Sare_4253"/>
<dbReference type="KEGG" id="saq:Sare_4253"/>
<dbReference type="PATRIC" id="fig|391037.6.peg.4293"/>
<dbReference type="eggNOG" id="COG0103">
    <property type="taxonomic scope" value="Bacteria"/>
</dbReference>
<dbReference type="HOGENOM" id="CLU_046483_2_0_11"/>
<dbReference type="OrthoDB" id="9803965at2"/>
<dbReference type="GO" id="GO:0005737">
    <property type="term" value="C:cytoplasm"/>
    <property type="evidence" value="ECO:0007669"/>
    <property type="project" value="UniProtKB-ARBA"/>
</dbReference>
<dbReference type="GO" id="GO:0015935">
    <property type="term" value="C:small ribosomal subunit"/>
    <property type="evidence" value="ECO:0007669"/>
    <property type="project" value="TreeGrafter"/>
</dbReference>
<dbReference type="GO" id="GO:0003723">
    <property type="term" value="F:RNA binding"/>
    <property type="evidence" value="ECO:0007669"/>
    <property type="project" value="TreeGrafter"/>
</dbReference>
<dbReference type="GO" id="GO:0003735">
    <property type="term" value="F:structural constituent of ribosome"/>
    <property type="evidence" value="ECO:0007669"/>
    <property type="project" value="InterPro"/>
</dbReference>
<dbReference type="GO" id="GO:0006412">
    <property type="term" value="P:translation"/>
    <property type="evidence" value="ECO:0007669"/>
    <property type="project" value="UniProtKB-UniRule"/>
</dbReference>
<dbReference type="FunFam" id="3.30.230.10:FF:000001">
    <property type="entry name" value="30S ribosomal protein S9"/>
    <property type="match status" value="1"/>
</dbReference>
<dbReference type="Gene3D" id="3.30.230.10">
    <property type="match status" value="1"/>
</dbReference>
<dbReference type="HAMAP" id="MF_00532_B">
    <property type="entry name" value="Ribosomal_uS9_B"/>
    <property type="match status" value="1"/>
</dbReference>
<dbReference type="InterPro" id="IPR020568">
    <property type="entry name" value="Ribosomal_Su5_D2-typ_SF"/>
</dbReference>
<dbReference type="InterPro" id="IPR000754">
    <property type="entry name" value="Ribosomal_uS9"/>
</dbReference>
<dbReference type="InterPro" id="IPR023035">
    <property type="entry name" value="Ribosomal_uS9_bac/plastid"/>
</dbReference>
<dbReference type="InterPro" id="IPR020574">
    <property type="entry name" value="Ribosomal_uS9_CS"/>
</dbReference>
<dbReference type="InterPro" id="IPR014721">
    <property type="entry name" value="Ribsml_uS5_D2-typ_fold_subgr"/>
</dbReference>
<dbReference type="NCBIfam" id="NF001099">
    <property type="entry name" value="PRK00132.1"/>
    <property type="match status" value="1"/>
</dbReference>
<dbReference type="PANTHER" id="PTHR21569">
    <property type="entry name" value="RIBOSOMAL PROTEIN S9"/>
    <property type="match status" value="1"/>
</dbReference>
<dbReference type="PANTHER" id="PTHR21569:SF1">
    <property type="entry name" value="SMALL RIBOSOMAL SUBUNIT PROTEIN US9M"/>
    <property type="match status" value="1"/>
</dbReference>
<dbReference type="Pfam" id="PF00380">
    <property type="entry name" value="Ribosomal_S9"/>
    <property type="match status" value="1"/>
</dbReference>
<dbReference type="SUPFAM" id="SSF54211">
    <property type="entry name" value="Ribosomal protein S5 domain 2-like"/>
    <property type="match status" value="1"/>
</dbReference>
<dbReference type="PROSITE" id="PS00360">
    <property type="entry name" value="RIBOSOMAL_S9"/>
    <property type="match status" value="1"/>
</dbReference>
<reference key="1">
    <citation type="submission" date="2007-10" db="EMBL/GenBank/DDBJ databases">
        <title>Complete sequence of Salinispora arenicola CNS-205.</title>
        <authorList>
            <consortium name="US DOE Joint Genome Institute"/>
            <person name="Copeland A."/>
            <person name="Lucas S."/>
            <person name="Lapidus A."/>
            <person name="Barry K."/>
            <person name="Glavina del Rio T."/>
            <person name="Dalin E."/>
            <person name="Tice H."/>
            <person name="Pitluck S."/>
            <person name="Foster B."/>
            <person name="Schmutz J."/>
            <person name="Larimer F."/>
            <person name="Land M."/>
            <person name="Hauser L."/>
            <person name="Kyrpides N."/>
            <person name="Ivanova N."/>
            <person name="Jensen P.R."/>
            <person name="Moore B.S."/>
            <person name="Penn K."/>
            <person name="Jenkins C."/>
            <person name="Udwary D."/>
            <person name="Xiang L."/>
            <person name="Gontang E."/>
            <person name="Richardson P."/>
        </authorList>
    </citation>
    <scope>NUCLEOTIDE SEQUENCE [LARGE SCALE GENOMIC DNA]</scope>
    <source>
        <strain>CNS-205</strain>
    </source>
</reference>
<name>RS9_SALAI</name>
<sequence>MTDIIATEVAPEAAEALAPVARAPLGDRPIQTVGRRKEAIVRVRIVPGSGRITCNGRELEAYFPSKVHQQLIKDPLVTTEKAETFDVIANLRGGGTTGQAGALRLAIARALIASEPDDRPALKKAGFLTRDARVKESKKYGLKKARKAPQYSKR</sequence>
<keyword id="KW-0687">Ribonucleoprotein</keyword>
<keyword id="KW-0689">Ribosomal protein</keyword>
<organism>
    <name type="scientific">Salinispora arenicola (strain CNS-205)</name>
    <dbReference type="NCBI Taxonomy" id="391037"/>
    <lineage>
        <taxon>Bacteria</taxon>
        <taxon>Bacillati</taxon>
        <taxon>Actinomycetota</taxon>
        <taxon>Actinomycetes</taxon>
        <taxon>Micromonosporales</taxon>
        <taxon>Micromonosporaceae</taxon>
        <taxon>Salinispora</taxon>
    </lineage>
</organism>
<gene>
    <name evidence="1" type="primary">rpsI</name>
    <name type="ordered locus">Sare_4253</name>
</gene>
<protein>
    <recommendedName>
        <fullName evidence="1">Small ribosomal subunit protein uS9</fullName>
    </recommendedName>
    <alternativeName>
        <fullName evidence="3">30S ribosomal protein S9</fullName>
    </alternativeName>
</protein>
<feature type="chain" id="PRO_1000081829" description="Small ribosomal subunit protein uS9">
    <location>
        <begin position="1"/>
        <end position="154"/>
    </location>
</feature>
<feature type="region of interest" description="Disordered" evidence="2">
    <location>
        <begin position="135"/>
        <end position="154"/>
    </location>
</feature>
<feature type="compositionally biased region" description="Basic residues" evidence="2">
    <location>
        <begin position="140"/>
        <end position="154"/>
    </location>
</feature>
<accession>A8M4B9</accession>